<reference key="1">
    <citation type="journal article" date="2004" name="Nat. Genet.">
        <title>Complete sequencing and characterization of 21,243 full-length human cDNAs.</title>
        <authorList>
            <person name="Ota T."/>
            <person name="Suzuki Y."/>
            <person name="Nishikawa T."/>
            <person name="Otsuki T."/>
            <person name="Sugiyama T."/>
            <person name="Irie R."/>
            <person name="Wakamatsu A."/>
            <person name="Hayashi K."/>
            <person name="Sato H."/>
            <person name="Nagai K."/>
            <person name="Kimura K."/>
            <person name="Makita H."/>
            <person name="Sekine M."/>
            <person name="Obayashi M."/>
            <person name="Nishi T."/>
            <person name="Shibahara T."/>
            <person name="Tanaka T."/>
            <person name="Ishii S."/>
            <person name="Yamamoto J."/>
            <person name="Saito K."/>
            <person name="Kawai Y."/>
            <person name="Isono Y."/>
            <person name="Nakamura Y."/>
            <person name="Nagahari K."/>
            <person name="Murakami K."/>
            <person name="Yasuda T."/>
            <person name="Iwayanagi T."/>
            <person name="Wagatsuma M."/>
            <person name="Shiratori A."/>
            <person name="Sudo H."/>
            <person name="Hosoiri T."/>
            <person name="Kaku Y."/>
            <person name="Kodaira H."/>
            <person name="Kondo H."/>
            <person name="Sugawara M."/>
            <person name="Takahashi M."/>
            <person name="Kanda K."/>
            <person name="Yokoi T."/>
            <person name="Furuya T."/>
            <person name="Kikkawa E."/>
            <person name="Omura Y."/>
            <person name="Abe K."/>
            <person name="Kamihara K."/>
            <person name="Katsuta N."/>
            <person name="Sato K."/>
            <person name="Tanikawa M."/>
            <person name="Yamazaki M."/>
            <person name="Ninomiya K."/>
            <person name="Ishibashi T."/>
            <person name="Yamashita H."/>
            <person name="Murakawa K."/>
            <person name="Fujimori K."/>
            <person name="Tanai H."/>
            <person name="Kimata M."/>
            <person name="Watanabe M."/>
            <person name="Hiraoka S."/>
            <person name="Chiba Y."/>
            <person name="Ishida S."/>
            <person name="Ono Y."/>
            <person name="Takiguchi S."/>
            <person name="Watanabe S."/>
            <person name="Yosida M."/>
            <person name="Hotuta T."/>
            <person name="Kusano J."/>
            <person name="Kanehori K."/>
            <person name="Takahashi-Fujii A."/>
            <person name="Hara H."/>
            <person name="Tanase T.-O."/>
            <person name="Nomura Y."/>
            <person name="Togiya S."/>
            <person name="Komai F."/>
            <person name="Hara R."/>
            <person name="Takeuchi K."/>
            <person name="Arita M."/>
            <person name="Imose N."/>
            <person name="Musashino K."/>
            <person name="Yuuki H."/>
            <person name="Oshima A."/>
            <person name="Sasaki N."/>
            <person name="Aotsuka S."/>
            <person name="Yoshikawa Y."/>
            <person name="Matsunawa H."/>
            <person name="Ichihara T."/>
            <person name="Shiohata N."/>
            <person name="Sano S."/>
            <person name="Moriya S."/>
            <person name="Momiyama H."/>
            <person name="Satoh N."/>
            <person name="Takami S."/>
            <person name="Terashima Y."/>
            <person name="Suzuki O."/>
            <person name="Nakagawa S."/>
            <person name="Senoh A."/>
            <person name="Mizoguchi H."/>
            <person name="Goto Y."/>
            <person name="Shimizu F."/>
            <person name="Wakebe H."/>
            <person name="Hishigaki H."/>
            <person name="Watanabe T."/>
            <person name="Sugiyama A."/>
            <person name="Takemoto M."/>
            <person name="Kawakami B."/>
            <person name="Yamazaki M."/>
            <person name="Watanabe K."/>
            <person name="Kumagai A."/>
            <person name="Itakura S."/>
            <person name="Fukuzumi Y."/>
            <person name="Fujimori Y."/>
            <person name="Komiyama M."/>
            <person name="Tashiro H."/>
            <person name="Tanigami A."/>
            <person name="Fujiwara T."/>
            <person name="Ono T."/>
            <person name="Yamada K."/>
            <person name="Fujii Y."/>
            <person name="Ozaki K."/>
            <person name="Hirao M."/>
            <person name="Ohmori Y."/>
            <person name="Kawabata A."/>
            <person name="Hikiji T."/>
            <person name="Kobatake N."/>
            <person name="Inagaki H."/>
            <person name="Ikema Y."/>
            <person name="Okamoto S."/>
            <person name="Okitani R."/>
            <person name="Kawakami T."/>
            <person name="Noguchi S."/>
            <person name="Itoh T."/>
            <person name="Shigeta K."/>
            <person name="Senba T."/>
            <person name="Matsumura K."/>
            <person name="Nakajima Y."/>
            <person name="Mizuno T."/>
            <person name="Morinaga M."/>
            <person name="Sasaki M."/>
            <person name="Togashi T."/>
            <person name="Oyama M."/>
            <person name="Hata H."/>
            <person name="Watanabe M."/>
            <person name="Komatsu T."/>
            <person name="Mizushima-Sugano J."/>
            <person name="Satoh T."/>
            <person name="Shirai Y."/>
            <person name="Takahashi Y."/>
            <person name="Nakagawa K."/>
            <person name="Okumura K."/>
            <person name="Nagase T."/>
            <person name="Nomura N."/>
            <person name="Kikuchi H."/>
            <person name="Masuho Y."/>
            <person name="Yamashita R."/>
            <person name="Nakai K."/>
            <person name="Yada T."/>
            <person name="Nakamura Y."/>
            <person name="Ohara O."/>
            <person name="Isogai T."/>
            <person name="Sugano S."/>
        </authorList>
    </citation>
    <scope>NUCLEOTIDE SEQUENCE [LARGE SCALE MRNA]</scope>
    <source>
        <tissue>Prostate</tissue>
    </source>
</reference>
<reference key="2">
    <citation type="journal article" date="2007" name="BMC Genomics">
        <title>The full-ORF clone resource of the German cDNA consortium.</title>
        <authorList>
            <person name="Bechtel S."/>
            <person name="Rosenfelder H."/>
            <person name="Duda A."/>
            <person name="Schmidt C.P."/>
            <person name="Ernst U."/>
            <person name="Wellenreuther R."/>
            <person name="Mehrle A."/>
            <person name="Schuster C."/>
            <person name="Bahr A."/>
            <person name="Bloecker H."/>
            <person name="Heubner D."/>
            <person name="Hoerlein A."/>
            <person name="Michel G."/>
            <person name="Wedler H."/>
            <person name="Koehrer K."/>
            <person name="Ottenwaelder B."/>
            <person name="Poustka A."/>
            <person name="Wiemann S."/>
            <person name="Schupp I."/>
        </authorList>
    </citation>
    <scope>NUCLEOTIDE SEQUENCE [LARGE SCALE MRNA]</scope>
    <source>
        <tissue>Cervix</tissue>
    </source>
</reference>
<reference key="3">
    <citation type="submission" date="2006-12" db="EMBL/GenBank/DDBJ databases">
        <authorList>
            <person name="Mural R.J."/>
            <person name="Istrail S."/>
            <person name="Sutton G.G."/>
            <person name="Florea L."/>
            <person name="Halpern A.L."/>
            <person name="Mobarry C.M."/>
            <person name="Lippert R."/>
            <person name="Walenz B."/>
            <person name="Shatkay H."/>
            <person name="Dew I."/>
            <person name="Miller J.R."/>
            <person name="Flanigan M.J."/>
            <person name="Edwards N.J."/>
            <person name="Bolanos R."/>
            <person name="Fasulo D."/>
            <person name="Halldorsson B.V."/>
            <person name="Hannenhalli S."/>
            <person name="Turner R."/>
            <person name="Yooseph S."/>
            <person name="Lu F."/>
            <person name="Nusskern D.R."/>
            <person name="Shue B.C."/>
            <person name="Zheng X.H."/>
            <person name="Zhong F."/>
            <person name="Delcher A.L."/>
            <person name="Huson D.H."/>
            <person name="Kravitz S.A."/>
            <person name="Mouchard L."/>
            <person name="Reinert K."/>
            <person name="Remington K.A."/>
            <person name="Clark A.G."/>
            <person name="Waterman M.S."/>
            <person name="Eichler E.E."/>
            <person name="Adams M.D."/>
            <person name="Hunkapiller M.W."/>
            <person name="Myers E.W."/>
            <person name="Venter J.C."/>
        </authorList>
    </citation>
    <scope>NUCLEOTIDE SEQUENCE [LARGE SCALE GENOMIC DNA]</scope>
</reference>
<reference key="4">
    <citation type="journal article" date="2004" name="Genome Res.">
        <title>The status, quality, and expansion of the NIH full-length cDNA project: the Mammalian Gene Collection (MGC).</title>
        <authorList>
            <consortium name="The MGC Project Team"/>
        </authorList>
    </citation>
    <scope>NUCLEOTIDE SEQUENCE [LARGE SCALE MRNA]</scope>
    <source>
        <tissue>Brain</tissue>
    </source>
</reference>
<reference key="5">
    <citation type="journal article" date="2003" name="Mol. Cell">
        <title>Identification of modulators of TRAIL-induced apoptosis via RNAi-based phenotypic screening.</title>
        <authorList>
            <person name="Aza-Blanc P."/>
            <person name="Cooper C.L."/>
            <person name="Wagner K."/>
            <person name="Batalov S."/>
            <person name="Deveraux Q.L."/>
            <person name="Cooke M.P."/>
        </authorList>
    </citation>
    <scope>FUNCTION</scope>
</reference>
<reference key="6">
    <citation type="journal article" date="2007" name="Science">
        <title>ATM and ATR substrate analysis reveals extensive protein networks responsive to DNA damage.</title>
        <authorList>
            <person name="Matsuoka S."/>
            <person name="Ballif B.A."/>
            <person name="Smogorzewska A."/>
            <person name="McDonald E.R. III"/>
            <person name="Hurov K.E."/>
            <person name="Luo J."/>
            <person name="Bakalarski C.E."/>
            <person name="Zhao Z."/>
            <person name="Solimini N."/>
            <person name="Lerenthal Y."/>
            <person name="Shiloh Y."/>
            <person name="Gygi S.P."/>
            <person name="Elledge S.J."/>
        </authorList>
    </citation>
    <scope>PHOSPHORYLATION [LARGE SCALE ANALYSIS] AT SER-79 AND SER-84</scope>
    <scope>IDENTIFICATION BY MASS SPECTROMETRY [LARGE SCALE ANALYSIS]</scope>
    <source>
        <tissue>Embryonic kidney</tissue>
    </source>
</reference>
<reference key="7">
    <citation type="journal article" date="2009" name="BMB Rep.">
        <title>DOBI is cleaved by caspases during TRAIL-induced apoptotic cell death.</title>
        <authorList>
            <person name="Park S.Y."/>
            <person name="Shin J.N."/>
            <person name="Woo H.N."/>
            <person name="Piya S."/>
            <person name="Moon A.R."/>
            <person name="Seo Y.W."/>
            <person name="Seol D.W."/>
            <person name="Kim T.H."/>
        </authorList>
    </citation>
    <scope>PROTEOLYTIC CLEAVAGE</scope>
    <scope>FUNCTION</scope>
</reference>
<reference key="8">
    <citation type="journal article" date="2013" name="J. Proteome Res.">
        <title>Toward a comprehensive characterization of a human cancer cell phosphoproteome.</title>
        <authorList>
            <person name="Zhou H."/>
            <person name="Di Palma S."/>
            <person name="Preisinger C."/>
            <person name="Peng M."/>
            <person name="Polat A.N."/>
            <person name="Heck A.J."/>
            <person name="Mohammed S."/>
        </authorList>
    </citation>
    <scope>PHOSPHORYLATION [LARGE SCALE ANALYSIS] AT SER-84</scope>
    <scope>IDENTIFICATION BY MASS SPECTROMETRY [LARGE SCALE ANALYSIS]</scope>
    <source>
        <tissue>Erythroleukemia</tissue>
    </source>
</reference>
<reference key="9">
    <citation type="journal article" date="2017" name="Cell Death Dis.">
        <title>Reciprocal amplification of caspase-3 activity by nuclear export of a putative human RNA-modifying protein, PUS10 during TRAIL-induced apoptosis.</title>
        <authorList>
            <person name="Jana S."/>
            <person name="Hsieh A.C."/>
            <person name="Gupta R."/>
        </authorList>
    </citation>
    <scope>FUNCTION</scope>
    <scope>SUBCELLULAR LOCATION</scope>
</reference>
<reference key="10">
    <citation type="journal article" date="2020" name="Nat. Chem. Biol.">
        <title>Differential roles of human PUS10 in miRNA processing and tRNA pseudouridylation.</title>
        <authorList>
            <person name="Song J."/>
            <person name="Zhuang Y."/>
            <person name="Zhu C."/>
            <person name="Meng H."/>
            <person name="Lu B."/>
            <person name="Xie B."/>
            <person name="Peng J."/>
            <person name="Li M."/>
            <person name="Yi C."/>
        </authorList>
    </citation>
    <scope>FUNCTION</scope>
    <scope>CATALYTIC ACTIVITY</scope>
    <scope>SUBCELLULAR LOCATION</scope>
    <scope>INTERACTION WITH DROSHA AND DGCR8</scope>
    <scope>ACTIVE SITE</scope>
    <scope>MUTAGENESIS OF ASP-344</scope>
</reference>
<reference key="11">
    <citation type="journal article" date="2019" name="RNA">
        <title>The human ortholog of archaeal Pus10 produces pseudouridine 54 in select tRNAs where its recognition sequence contains a modified residue.</title>
        <authorList>
            <person name="Deogharia M."/>
            <person name="Mukhopadhyay S."/>
            <person name="Joardar A."/>
            <person name="Gupta R."/>
        </authorList>
    </citation>
    <scope>FUNCTION</scope>
    <scope>CATALYTIC ACTIVITY</scope>
    <scope>ACTIVE SITE</scope>
    <scope>MUTAGENESIS OF ASP-344</scope>
</reference>
<reference key="12">
    <citation type="journal article" date="2021" name="RNA">
        <title>Mammalian nuclear TRUB1, mitochondrial TRUB2, and cytoplasmic PUS10 produce conserved pseudouridine 55 in different sets of tRNA.</title>
        <authorList>
            <person name="Mukhopadhyay S."/>
            <person name="Deogharia M."/>
            <person name="Gupta R."/>
        </authorList>
    </citation>
    <scope>FUNCTION</scope>
    <scope>CATALYTIC ACTIVITY</scope>
    <scope>SUBCELLULAR LOCATION</scope>
</reference>
<reference key="13">
    <citation type="journal article" date="2007" name="J. Mol. Biol.">
        <title>Crystal structure of human Pus10, a novel pseudouridine synthase.</title>
        <authorList>
            <person name="McCleverty C.J."/>
            <person name="Hornsby M."/>
            <person name="Spraggon G."/>
            <person name="Kreusch A."/>
        </authorList>
    </citation>
    <scope>X-RAY CRYSTALLOGRAPHY (2.0 ANGSTROMS) IN COMPLEX WITH ZINC</scope>
</reference>
<reference key="14">
    <citation type="journal article" date="2006" name="Science">
        <title>The consensus coding sequences of human breast and colorectal cancers.</title>
        <authorList>
            <person name="Sjoeblom T."/>
            <person name="Jones S."/>
            <person name="Wood L.D."/>
            <person name="Parsons D.W."/>
            <person name="Lin J."/>
            <person name="Barber T.D."/>
            <person name="Mandelker D."/>
            <person name="Leary R.J."/>
            <person name="Ptak J."/>
            <person name="Silliman N."/>
            <person name="Szabo S."/>
            <person name="Buckhaults P."/>
            <person name="Farrell C."/>
            <person name="Meeh P."/>
            <person name="Markowitz S.D."/>
            <person name="Willis J."/>
            <person name="Dawson D."/>
            <person name="Willson J.K.V."/>
            <person name="Gazdar A.F."/>
            <person name="Hartigan J."/>
            <person name="Wu L."/>
            <person name="Liu C."/>
            <person name="Parmigiani G."/>
            <person name="Park B.H."/>
            <person name="Bachman K.E."/>
            <person name="Papadopoulos N."/>
            <person name="Vogelstein B."/>
            <person name="Kinzler K.W."/>
            <person name="Velculescu V.E."/>
        </authorList>
    </citation>
    <scope>VARIANT [LARGE SCALE ANALYSIS] ILE-484</scope>
</reference>
<feature type="chain" id="PRO_0000299022" description="tRNA pseudouridine synthase Pus10">
    <location>
        <begin position="1"/>
        <end position="529"/>
    </location>
</feature>
<feature type="region of interest" description="RNA binding forefinger loop" evidence="1">
    <location>
        <begin position="304"/>
        <end position="317"/>
    </location>
</feature>
<feature type="region of interest" description="RNA binding thumb loop" evidence="1">
    <location>
        <begin position="442"/>
        <end position="457"/>
    </location>
</feature>
<feature type="coiled-coil region" evidence="1">
    <location>
        <begin position="42"/>
        <end position="89"/>
    </location>
</feature>
<feature type="active site" description="Nucleophile" evidence="7 8">
    <location>
        <position position="344"/>
    </location>
</feature>
<feature type="binding site" evidence="4 15">
    <location>
        <position position="21"/>
    </location>
    <ligand>
        <name>Zn(2+)</name>
        <dbReference type="ChEBI" id="CHEBI:29105"/>
    </ligand>
</feature>
<feature type="binding site" evidence="4 15">
    <location>
        <position position="24"/>
    </location>
    <ligand>
        <name>Zn(2+)</name>
        <dbReference type="ChEBI" id="CHEBI:29105"/>
    </ligand>
</feature>
<feature type="binding site" evidence="4 15">
    <location>
        <position position="109"/>
    </location>
    <ligand>
        <name>Zn(2+)</name>
        <dbReference type="ChEBI" id="CHEBI:29105"/>
    </ligand>
</feature>
<feature type="binding site" evidence="4 15">
    <location>
        <position position="112"/>
    </location>
    <ligand>
        <name>Zn(2+)</name>
        <dbReference type="ChEBI" id="CHEBI:29105"/>
    </ligand>
</feature>
<feature type="modified residue" description="Phosphoserine" evidence="16">
    <location>
        <position position="79"/>
    </location>
</feature>
<feature type="modified residue" description="Phosphoserine" evidence="16 17">
    <location>
        <position position="84"/>
    </location>
</feature>
<feature type="sequence variant" id="VAR_035617" description="In a colorectal cancer sample; somatic mutation; dbSNP:rs1486089321." evidence="3">
    <original>T</original>
    <variation>I</variation>
    <location>
        <position position="484"/>
    </location>
</feature>
<feature type="mutagenesis site" description="Abolished tRNA pseudouridine synthase without affecting ability to promote miRNA processing." evidence="7 8">
    <original>D</original>
    <variation>A</variation>
    <location>
        <position position="344"/>
    </location>
</feature>
<feature type="sequence conflict" description="In Ref. 1; BAB71300." evidence="12" ref="1">
    <original>F</original>
    <variation>L</variation>
    <location>
        <position position="208"/>
    </location>
</feature>
<feature type="helix" evidence="18">
    <location>
        <begin position="6"/>
        <end position="8"/>
    </location>
</feature>
<feature type="helix" evidence="18">
    <location>
        <begin position="9"/>
        <end position="18"/>
    </location>
</feature>
<feature type="helix" evidence="18">
    <location>
        <begin position="22"/>
        <end position="28"/>
    </location>
</feature>
<feature type="helix" evidence="18">
    <location>
        <begin position="35"/>
        <end position="38"/>
    </location>
</feature>
<feature type="helix" evidence="18">
    <location>
        <begin position="41"/>
        <end position="52"/>
    </location>
</feature>
<feature type="turn" evidence="18">
    <location>
        <begin position="110"/>
        <end position="117"/>
    </location>
</feature>
<feature type="helix" evidence="18">
    <location>
        <begin position="118"/>
        <end position="120"/>
    </location>
</feature>
<feature type="helix" evidence="18">
    <location>
        <begin position="122"/>
        <end position="134"/>
    </location>
</feature>
<feature type="strand" evidence="18">
    <location>
        <begin position="142"/>
        <end position="147"/>
    </location>
</feature>
<feature type="helix" evidence="18">
    <location>
        <begin position="152"/>
        <end position="169"/>
    </location>
</feature>
<feature type="helix" evidence="18">
    <location>
        <begin position="176"/>
        <end position="178"/>
    </location>
</feature>
<feature type="helix" evidence="18">
    <location>
        <begin position="182"/>
        <end position="198"/>
    </location>
</feature>
<feature type="strand" evidence="18">
    <location>
        <begin position="207"/>
        <end position="215"/>
    </location>
</feature>
<feature type="helix" evidence="18">
    <location>
        <begin position="217"/>
        <end position="220"/>
    </location>
</feature>
<feature type="helix" evidence="18">
    <location>
        <begin position="221"/>
        <end position="227"/>
    </location>
</feature>
<feature type="helix" evidence="18">
    <location>
        <begin position="246"/>
        <end position="255"/>
    </location>
</feature>
<feature type="helix" evidence="18">
    <location>
        <begin position="258"/>
        <end position="264"/>
    </location>
</feature>
<feature type="strand" evidence="18">
    <location>
        <begin position="277"/>
        <end position="285"/>
    </location>
</feature>
<feature type="strand" evidence="18">
    <location>
        <begin position="288"/>
        <end position="296"/>
    </location>
</feature>
<feature type="strand" evidence="18">
    <location>
        <begin position="307"/>
        <end position="315"/>
    </location>
</feature>
<feature type="helix" evidence="18">
    <location>
        <begin position="318"/>
        <end position="323"/>
    </location>
</feature>
<feature type="helix" evidence="18">
    <location>
        <begin position="326"/>
        <end position="330"/>
    </location>
</feature>
<feature type="strand" evidence="18">
    <location>
        <begin position="333"/>
        <end position="341"/>
    </location>
</feature>
<feature type="strand" evidence="18">
    <location>
        <begin position="348"/>
        <end position="362"/>
    </location>
</feature>
<feature type="helix" evidence="18">
    <location>
        <begin position="370"/>
        <end position="381"/>
    </location>
</feature>
<feature type="strand" evidence="18">
    <location>
        <begin position="385"/>
        <end position="395"/>
    </location>
</feature>
<feature type="helix" evidence="18">
    <location>
        <begin position="398"/>
        <end position="409"/>
    </location>
</feature>
<feature type="strand" evidence="18">
    <location>
        <begin position="412"/>
        <end position="422"/>
    </location>
</feature>
<feature type="helix" evidence="18">
    <location>
        <begin position="426"/>
        <end position="429"/>
    </location>
</feature>
<feature type="helix" evidence="18">
    <location>
        <begin position="430"/>
        <end position="434"/>
    </location>
</feature>
<feature type="strand" evidence="18">
    <location>
        <begin position="437"/>
        <end position="443"/>
    </location>
</feature>
<feature type="helix" evidence="18">
    <location>
        <begin position="446"/>
        <end position="448"/>
    </location>
</feature>
<feature type="turn" evidence="18">
    <location>
        <begin position="449"/>
        <end position="451"/>
    </location>
</feature>
<feature type="strand" evidence="18">
    <location>
        <begin position="456"/>
        <end position="470"/>
    </location>
</feature>
<feature type="strand" evidence="18">
    <location>
        <begin position="473"/>
        <end position="480"/>
    </location>
</feature>
<feature type="helix" evidence="18">
    <location>
        <begin position="486"/>
        <end position="491"/>
    </location>
</feature>
<feature type="turn" evidence="18">
    <location>
        <begin position="493"/>
        <end position="496"/>
    </location>
</feature>
<feature type="strand" evidence="18">
    <location>
        <begin position="497"/>
        <end position="499"/>
    </location>
</feature>
<feature type="helix" evidence="18">
    <location>
        <begin position="501"/>
        <end position="505"/>
    </location>
</feature>
<feature type="strand" evidence="18">
    <location>
        <begin position="509"/>
        <end position="519"/>
    </location>
</feature>
<evidence type="ECO:0000255" key="1"/>
<evidence type="ECO:0000269" key="2">
    <source>
    </source>
</evidence>
<evidence type="ECO:0000269" key="3">
    <source>
    </source>
</evidence>
<evidence type="ECO:0000269" key="4">
    <source>
    </source>
</evidence>
<evidence type="ECO:0000269" key="5">
    <source>
    </source>
</evidence>
<evidence type="ECO:0000269" key="6">
    <source>
    </source>
</evidence>
<evidence type="ECO:0000269" key="7">
    <source>
    </source>
</evidence>
<evidence type="ECO:0000269" key="8">
    <source>
    </source>
</evidence>
<evidence type="ECO:0000269" key="9">
    <source>
    </source>
</evidence>
<evidence type="ECO:0000303" key="10">
    <source>
    </source>
</evidence>
<evidence type="ECO:0000303" key="11">
    <source>
    </source>
</evidence>
<evidence type="ECO:0000305" key="12"/>
<evidence type="ECO:0000305" key="13">
    <source>
    </source>
</evidence>
<evidence type="ECO:0000312" key="14">
    <source>
        <dbReference type="HGNC" id="HGNC:26505"/>
    </source>
</evidence>
<evidence type="ECO:0007744" key="15">
    <source>
        <dbReference type="PDB" id="2V9K"/>
    </source>
</evidence>
<evidence type="ECO:0007744" key="16">
    <source>
    </source>
</evidence>
<evidence type="ECO:0007744" key="17">
    <source>
    </source>
</evidence>
<evidence type="ECO:0007829" key="18">
    <source>
        <dbReference type="PDB" id="2V9K"/>
    </source>
</evidence>
<organism>
    <name type="scientific">Homo sapiens</name>
    <name type="common">Human</name>
    <dbReference type="NCBI Taxonomy" id="9606"/>
    <lineage>
        <taxon>Eukaryota</taxon>
        <taxon>Metazoa</taxon>
        <taxon>Chordata</taxon>
        <taxon>Craniata</taxon>
        <taxon>Vertebrata</taxon>
        <taxon>Euteleostomi</taxon>
        <taxon>Mammalia</taxon>
        <taxon>Eutheria</taxon>
        <taxon>Euarchontoglires</taxon>
        <taxon>Primates</taxon>
        <taxon>Haplorrhini</taxon>
        <taxon>Catarrhini</taxon>
        <taxon>Hominidae</taxon>
        <taxon>Homo</taxon>
    </lineage>
</organism>
<dbReference type="EC" id="5.4.99.25" evidence="8 9"/>
<dbReference type="EMBL" id="AK056874">
    <property type="protein sequence ID" value="BAB71300.1"/>
    <property type="molecule type" value="mRNA"/>
</dbReference>
<dbReference type="EMBL" id="AL832208">
    <property type="protein sequence ID" value="CAI46123.1"/>
    <property type="status" value="ALT_SEQ"/>
    <property type="molecule type" value="Transcribed_RNA"/>
</dbReference>
<dbReference type="EMBL" id="CH471053">
    <property type="protein sequence ID" value="EAX00024.1"/>
    <property type="molecule type" value="Genomic_DNA"/>
</dbReference>
<dbReference type="EMBL" id="BC101680">
    <property type="protein sequence ID" value="AAI01681.1"/>
    <property type="molecule type" value="mRNA"/>
</dbReference>
<dbReference type="EMBL" id="BC101706">
    <property type="protein sequence ID" value="AAI01707.1"/>
    <property type="molecule type" value="mRNA"/>
</dbReference>
<dbReference type="CCDS" id="CCDS1865.1"/>
<dbReference type="RefSeq" id="NP_001309052.1">
    <property type="nucleotide sequence ID" value="NM_001322123.1"/>
</dbReference>
<dbReference type="RefSeq" id="NP_001309053.1">
    <property type="nucleotide sequence ID" value="NM_001322124.1"/>
</dbReference>
<dbReference type="RefSeq" id="NP_653310.2">
    <property type="nucleotide sequence ID" value="NM_144709.4"/>
</dbReference>
<dbReference type="RefSeq" id="XP_011530870.1">
    <property type="nucleotide sequence ID" value="XM_011532568.4"/>
</dbReference>
<dbReference type="RefSeq" id="XP_011530872.1">
    <property type="nucleotide sequence ID" value="XM_011532570.3"/>
</dbReference>
<dbReference type="RefSeq" id="XP_011530873.1">
    <property type="nucleotide sequence ID" value="XM_011532571.3"/>
</dbReference>
<dbReference type="RefSeq" id="XP_011530874.1">
    <property type="nucleotide sequence ID" value="XM_011532572.1"/>
</dbReference>
<dbReference type="RefSeq" id="XP_011530875.1">
    <property type="nucleotide sequence ID" value="XM_011532573.4"/>
</dbReference>
<dbReference type="RefSeq" id="XP_011530876.1">
    <property type="nucleotide sequence ID" value="XM_011532574.4"/>
</dbReference>
<dbReference type="RefSeq" id="XP_011530878.1">
    <property type="nucleotide sequence ID" value="XM_011532576.4"/>
</dbReference>
<dbReference type="RefSeq" id="XP_024308488.1">
    <property type="nucleotide sequence ID" value="XM_024452720.2"/>
</dbReference>
<dbReference type="RefSeq" id="XP_047299431.1">
    <property type="nucleotide sequence ID" value="XM_047443475.1"/>
</dbReference>
<dbReference type="RefSeq" id="XP_047299432.1">
    <property type="nucleotide sequence ID" value="XM_047443476.1"/>
</dbReference>
<dbReference type="RefSeq" id="XP_047299433.1">
    <property type="nucleotide sequence ID" value="XM_047443477.1"/>
</dbReference>
<dbReference type="RefSeq" id="XP_054196672.1">
    <property type="nucleotide sequence ID" value="XM_054340697.1"/>
</dbReference>
<dbReference type="RefSeq" id="XP_054196673.1">
    <property type="nucleotide sequence ID" value="XM_054340698.1"/>
</dbReference>
<dbReference type="RefSeq" id="XP_054196674.1">
    <property type="nucleotide sequence ID" value="XM_054340699.1"/>
</dbReference>
<dbReference type="RefSeq" id="XP_054196675.1">
    <property type="nucleotide sequence ID" value="XM_054340700.1"/>
</dbReference>
<dbReference type="RefSeq" id="XP_054196676.1">
    <property type="nucleotide sequence ID" value="XM_054340701.1"/>
</dbReference>
<dbReference type="RefSeq" id="XP_054196677.1">
    <property type="nucleotide sequence ID" value="XM_054340702.1"/>
</dbReference>
<dbReference type="RefSeq" id="XP_054196678.1">
    <property type="nucleotide sequence ID" value="XM_054340703.1"/>
</dbReference>
<dbReference type="RefSeq" id="XP_054196679.1">
    <property type="nucleotide sequence ID" value="XM_054340704.1"/>
</dbReference>
<dbReference type="RefSeq" id="XP_054196680.1">
    <property type="nucleotide sequence ID" value="XM_054340705.1"/>
</dbReference>
<dbReference type="PDB" id="2V9K">
    <property type="method" value="X-ray"/>
    <property type="resolution" value="2.00 A"/>
    <property type="chains" value="A=1-529"/>
</dbReference>
<dbReference type="PDBsum" id="2V9K"/>
<dbReference type="SMR" id="Q3MIT2"/>
<dbReference type="BioGRID" id="127335">
    <property type="interactions" value="6"/>
</dbReference>
<dbReference type="FunCoup" id="Q3MIT2">
    <property type="interactions" value="4227"/>
</dbReference>
<dbReference type="IntAct" id="Q3MIT2">
    <property type="interactions" value="7"/>
</dbReference>
<dbReference type="STRING" id="9606.ENSP00000326003"/>
<dbReference type="GlyGen" id="Q3MIT2">
    <property type="glycosylation" value="3 sites, 1 O-linked glycan (3 sites)"/>
</dbReference>
<dbReference type="iPTMnet" id="Q3MIT2"/>
<dbReference type="PhosphoSitePlus" id="Q3MIT2"/>
<dbReference type="BioMuta" id="PUS10"/>
<dbReference type="DMDM" id="121942830"/>
<dbReference type="jPOST" id="Q3MIT2"/>
<dbReference type="MassIVE" id="Q3MIT2"/>
<dbReference type="PaxDb" id="9606-ENSP00000326003"/>
<dbReference type="PeptideAtlas" id="Q3MIT2"/>
<dbReference type="ProteomicsDB" id="61794"/>
<dbReference type="Pumba" id="Q3MIT2"/>
<dbReference type="Antibodypedia" id="47429">
    <property type="antibodies" value="112 antibodies from 17 providers"/>
</dbReference>
<dbReference type="DNASU" id="150962"/>
<dbReference type="Ensembl" id="ENST00000316752.11">
    <property type="protein sequence ID" value="ENSP00000326003.6"/>
    <property type="gene ID" value="ENSG00000162927.15"/>
</dbReference>
<dbReference type="Ensembl" id="ENST00000407787.6">
    <property type="protein sequence ID" value="ENSP00000386074.1"/>
    <property type="gene ID" value="ENSG00000162927.15"/>
</dbReference>
<dbReference type="GeneID" id="150962"/>
<dbReference type="KEGG" id="hsa:150962"/>
<dbReference type="MANE-Select" id="ENST00000316752.11">
    <property type="protein sequence ID" value="ENSP00000326003.6"/>
    <property type="RefSeq nucleotide sequence ID" value="NM_144709.4"/>
    <property type="RefSeq protein sequence ID" value="NP_653310.2"/>
</dbReference>
<dbReference type="UCSC" id="uc002sao.4">
    <property type="organism name" value="human"/>
</dbReference>
<dbReference type="AGR" id="HGNC:26505"/>
<dbReference type="CTD" id="150962"/>
<dbReference type="DisGeNET" id="150962"/>
<dbReference type="GeneCards" id="PUS10"/>
<dbReference type="HGNC" id="HGNC:26505">
    <property type="gene designation" value="PUS10"/>
</dbReference>
<dbReference type="HPA" id="ENSG00000162927">
    <property type="expression patterns" value="Low tissue specificity"/>
</dbReference>
<dbReference type="MalaCards" id="PUS10"/>
<dbReference type="MIM" id="612787">
    <property type="type" value="gene"/>
</dbReference>
<dbReference type="neXtProt" id="NX_Q3MIT2"/>
<dbReference type="OpenTargets" id="ENSG00000162927"/>
<dbReference type="PharmGKB" id="PA162400393"/>
<dbReference type="VEuPathDB" id="HostDB:ENSG00000162927"/>
<dbReference type="eggNOG" id="KOG2364">
    <property type="taxonomic scope" value="Eukaryota"/>
</dbReference>
<dbReference type="GeneTree" id="ENSGT00390000007529"/>
<dbReference type="HOGENOM" id="CLU_028780_2_0_1"/>
<dbReference type="InParanoid" id="Q3MIT2"/>
<dbReference type="OMA" id="LVISCQR"/>
<dbReference type="OrthoDB" id="271937at2759"/>
<dbReference type="PAN-GO" id="Q3MIT2">
    <property type="GO annotations" value="2 GO annotations based on evolutionary models"/>
</dbReference>
<dbReference type="PhylomeDB" id="Q3MIT2"/>
<dbReference type="TreeFam" id="TF106109"/>
<dbReference type="BRENDA" id="5.4.99.25">
    <property type="organism ID" value="2681"/>
</dbReference>
<dbReference type="BRENDA" id="5.4.99.B22">
    <property type="organism ID" value="2681"/>
</dbReference>
<dbReference type="BRENDA" id="5.4.99.B25">
    <property type="organism ID" value="2681"/>
</dbReference>
<dbReference type="PathwayCommons" id="Q3MIT2"/>
<dbReference type="SignaLink" id="Q3MIT2"/>
<dbReference type="BioGRID-ORCS" id="150962">
    <property type="hits" value="13 hits in 1156 CRISPR screens"/>
</dbReference>
<dbReference type="ChiTaRS" id="PUS10">
    <property type="organism name" value="human"/>
</dbReference>
<dbReference type="EvolutionaryTrace" id="Q3MIT2"/>
<dbReference type="GenomeRNAi" id="150962"/>
<dbReference type="Pharos" id="Q3MIT2">
    <property type="development level" value="Tbio"/>
</dbReference>
<dbReference type="PRO" id="PR:Q3MIT2"/>
<dbReference type="Proteomes" id="UP000005640">
    <property type="component" value="Chromosome 2"/>
</dbReference>
<dbReference type="RNAct" id="Q3MIT2">
    <property type="molecule type" value="protein"/>
</dbReference>
<dbReference type="Bgee" id="ENSG00000162927">
    <property type="expression patterns" value="Expressed in jejunal mucosa and 130 other cell types or tissues"/>
</dbReference>
<dbReference type="ExpressionAtlas" id="Q3MIT2">
    <property type="expression patterns" value="baseline and differential"/>
</dbReference>
<dbReference type="GO" id="GO:0005737">
    <property type="term" value="C:cytoplasm"/>
    <property type="evidence" value="ECO:0000314"/>
    <property type="project" value="UniProtKB"/>
</dbReference>
<dbReference type="GO" id="GO:0005739">
    <property type="term" value="C:mitochondrion"/>
    <property type="evidence" value="ECO:0007669"/>
    <property type="project" value="UniProtKB-SubCell"/>
</dbReference>
<dbReference type="GO" id="GO:0005634">
    <property type="term" value="C:nucleus"/>
    <property type="evidence" value="ECO:0000314"/>
    <property type="project" value="UniProtKB"/>
</dbReference>
<dbReference type="GO" id="GO:0046872">
    <property type="term" value="F:metal ion binding"/>
    <property type="evidence" value="ECO:0007669"/>
    <property type="project" value="UniProtKB-KW"/>
</dbReference>
<dbReference type="GO" id="GO:0070878">
    <property type="term" value="F:primary miRNA binding"/>
    <property type="evidence" value="ECO:0000314"/>
    <property type="project" value="UniProtKB"/>
</dbReference>
<dbReference type="GO" id="GO:0009982">
    <property type="term" value="F:pseudouridine synthase activity"/>
    <property type="evidence" value="ECO:0000314"/>
    <property type="project" value="UniProtKB"/>
</dbReference>
<dbReference type="GO" id="GO:0106029">
    <property type="term" value="F:tRNA pseudouridine synthase activity"/>
    <property type="evidence" value="ECO:0000314"/>
    <property type="project" value="UniProtKB"/>
</dbReference>
<dbReference type="GO" id="GO:0160148">
    <property type="term" value="F:tRNA pseudouridine(55) synthase activity"/>
    <property type="evidence" value="ECO:0007669"/>
    <property type="project" value="UniProtKB-EC"/>
</dbReference>
<dbReference type="GO" id="GO:0031053">
    <property type="term" value="P:primary miRNA processing"/>
    <property type="evidence" value="ECO:0000314"/>
    <property type="project" value="UniProtKB"/>
</dbReference>
<dbReference type="GO" id="GO:0031119">
    <property type="term" value="P:tRNA pseudouridine synthesis"/>
    <property type="evidence" value="ECO:0000314"/>
    <property type="project" value="UniProtKB"/>
</dbReference>
<dbReference type="DisProt" id="DP02614"/>
<dbReference type="FunFam" id="1.10.10.2050:FF:000001">
    <property type="entry name" value="putative tRNA pseudouridine synthase Pus10"/>
    <property type="match status" value="1"/>
</dbReference>
<dbReference type="FunFam" id="3.30.70.2510:FF:000001">
    <property type="entry name" value="tRNA pseudouridine synthase Pus10"/>
    <property type="match status" value="1"/>
</dbReference>
<dbReference type="FunFam" id="3.30.70.3190:FF:000001">
    <property type="entry name" value="tRNA pseudouridine synthase Pus10"/>
    <property type="match status" value="1"/>
</dbReference>
<dbReference type="Gene3D" id="1.10.10.2050">
    <property type="match status" value="1"/>
</dbReference>
<dbReference type="Gene3D" id="3.30.70.2510">
    <property type="match status" value="1"/>
</dbReference>
<dbReference type="Gene3D" id="3.30.70.3190">
    <property type="match status" value="1"/>
</dbReference>
<dbReference type="InterPro" id="IPR020103">
    <property type="entry name" value="PsdUridine_synth_cat_dom_sf"/>
</dbReference>
<dbReference type="InterPro" id="IPR039894">
    <property type="entry name" value="Pus10-like"/>
</dbReference>
<dbReference type="InterPro" id="IPR048741">
    <property type="entry name" value="Pus10-like_C"/>
</dbReference>
<dbReference type="InterPro" id="IPR048742">
    <property type="entry name" value="Pus10_N_euk"/>
</dbReference>
<dbReference type="NCBIfam" id="TIGR01213">
    <property type="entry name" value="pseudo_Pus10arc"/>
    <property type="match status" value="1"/>
</dbReference>
<dbReference type="PANTHER" id="PTHR21568">
    <property type="entry name" value="TRNA PSEUDOURIDINE SYNTHASE PUS10"/>
    <property type="match status" value="1"/>
</dbReference>
<dbReference type="PANTHER" id="PTHR21568:SF0">
    <property type="entry name" value="TRNA PSEUDOURIDINE SYNTHASE PUS10"/>
    <property type="match status" value="1"/>
</dbReference>
<dbReference type="Pfam" id="PF21238">
    <property type="entry name" value="Pus10_C"/>
    <property type="match status" value="1"/>
</dbReference>
<dbReference type="Pfam" id="PF21237">
    <property type="entry name" value="Pus10_N_euk"/>
    <property type="match status" value="1"/>
</dbReference>
<dbReference type="SUPFAM" id="SSF55120">
    <property type="entry name" value="Pseudouridine synthase"/>
    <property type="match status" value="1"/>
</dbReference>
<name>PUS10_HUMAN</name>
<sequence>MFPLTEENKHVAQLLLNTGTCPRCIFRFCGVDFHAPYKLPYKELLNELQKFLETEKDELILEVMNPPPKKIRLQELEDSIDNLSQNGEGRISVSHVGSTASKNSNLNVCNVCLGILQEFCEKDFIKKVCQKVEASGFEFTSLVFSVSFPPQLSVREHAAWLLVKQEMGKQSLSLGRDDIVQLKEAYKWITHPLFSEELGVPIDGKSLFEVSVVFAHPETVEDCHFLAAICPDCFKPAKNKQSVFTRMAVMKALNKIKEEDFLKQFPCPPNSPKAVCAVLEIECAHGAVFVAGRYNKYSRNLPQTPWIIDGERKLESSVEELISDHLLAVFKAESFNFSSSGREDVDVRTLGNGRPFAIELVNPHRVHFTSQEIKELQQKINNSSNKIQVRDLQLVTREAIGHMKEGEEEKTKTYSALIWTNKAIQKKDIEFLNDIKDLKIDQKTPLRVLHRRPLAVRARVIHFMETQYVDEHHFRLHLKTQAGTYIKEFVHGDFGRTKPNIGSLMNVTADILELDVESVDVDWPPALDD</sequence>
<protein>
    <recommendedName>
        <fullName>tRNA pseudouridine synthase Pus10</fullName>
        <shortName evidence="11">Hup10</shortName>
        <ecNumber evidence="8 9">5.4.99.25</ecNumber>
    </recommendedName>
    <alternativeName>
        <fullName evidence="14">Coiled-coil domain-containing protein 139</fullName>
    </alternativeName>
    <alternativeName>
        <fullName>tRNA pseudouridine 55 synthase</fullName>
        <shortName>Psi55 synthase</shortName>
    </alternativeName>
    <alternativeName>
        <fullName>tRNA pseudouridylate synthase</fullName>
    </alternativeName>
    <alternativeName>
        <fullName>tRNA-uridine isomerase</fullName>
    </alternativeName>
</protein>
<proteinExistence type="evidence at protein level"/>
<gene>
    <name evidence="14" type="primary">PUS10</name>
    <name evidence="14" type="synonym">CCDC139</name>
    <name evidence="10" type="synonym">DOBI</name>
</gene>
<keyword id="KW-0002">3D-structure</keyword>
<keyword id="KW-0175">Coiled coil</keyword>
<keyword id="KW-0963">Cytoplasm</keyword>
<keyword id="KW-0413">Isomerase</keyword>
<keyword id="KW-0479">Metal-binding</keyword>
<keyword id="KW-0496">Mitochondrion</keyword>
<keyword id="KW-0539">Nucleus</keyword>
<keyword id="KW-0597">Phosphoprotein</keyword>
<keyword id="KW-1267">Proteomics identification</keyword>
<keyword id="KW-1185">Reference proteome</keyword>
<keyword id="KW-0819">tRNA processing</keyword>
<keyword id="KW-0862">Zinc</keyword>
<comment type="function">
    <text evidence="2 5 7 8 9">Protein with different functions depending on its subcellular location: involved in miRNA processing in the nucleus and acts as a tRNA pseudouridylate synthase in the cytoplasm (PubMed:31819270, PubMed:33023933). In the cytoplasm, acts as a pseudouridylate synthase by catalyzing synthesis of pseudouridine(54) and pseudouridine(55) from uracil-54 and uracil-55, respectively, in the psi GC loop of a subset of tRNAs (PubMed:30530625, PubMed:31819270, PubMed:33023933). tRNA pseudouridylate synthase activity is enhanced by the presence of 1-methyladenosine at position 53-61 of tRNAs (PubMed:30530625). Does not show tRNA pseudouridylate synthase activity in the nucleus (PubMed:33023933). In the nucleus, promotes primary microRNAs (pri-miRNAs) processing independently of its RNA pseudouridylate synthase activity (PubMed:31819270). Binds pri-miRNAs (PubMed:31819270). Modulator of TRAIL/TNFSF10-induced cell death via activation of procaspase-8 and BID cleavage (PubMed:14527409, PubMed:19712588). Required for the progression of the apoptotic signal through intrinsic mitochondrial cell death (PubMed:19712588).</text>
</comment>
<comment type="catalytic activity">
    <reaction evidence="8 9">
        <text>uridine(55) in tRNA = pseudouridine(55) in tRNA</text>
        <dbReference type="Rhea" id="RHEA:42532"/>
        <dbReference type="Rhea" id="RHEA-COMP:10101"/>
        <dbReference type="Rhea" id="RHEA-COMP:10102"/>
        <dbReference type="ChEBI" id="CHEBI:65314"/>
        <dbReference type="ChEBI" id="CHEBI:65315"/>
        <dbReference type="EC" id="5.4.99.25"/>
    </reaction>
    <physiologicalReaction direction="left-to-right" evidence="8">
        <dbReference type="Rhea" id="RHEA:42533"/>
    </physiologicalReaction>
</comment>
<comment type="catalytic activity">
    <reaction evidence="7 8 9">
        <text>uridine(54) in tRNA = pseudouridine(54) in tRNA</text>
        <dbReference type="Rhea" id="RHEA:57876"/>
        <dbReference type="Rhea" id="RHEA-COMP:10193"/>
        <dbReference type="Rhea" id="RHEA-COMP:14141"/>
        <dbReference type="ChEBI" id="CHEBI:65314"/>
        <dbReference type="ChEBI" id="CHEBI:65315"/>
    </reaction>
    <physiologicalReaction direction="left-to-right" evidence="8">
        <dbReference type="Rhea" id="RHEA:57877"/>
    </physiologicalReaction>
</comment>
<comment type="subunit">
    <text evidence="8">Interacts with components of the microprocessor complex DROSHA and DGCR8.</text>
</comment>
<comment type="interaction">
    <interactant intactId="EBI-11983583">
        <id>Q3MIT2</id>
    </interactant>
    <interactant intactId="EBI-9105722">
        <id>Q9NX38</id>
        <label>ABITRAM</label>
    </interactant>
    <organismsDiffer>false</organismsDiffer>
    <experiments>9</experiments>
</comment>
<comment type="interaction">
    <interactant intactId="EBI-11983583">
        <id>Q3MIT2</id>
    </interactant>
    <interactant intactId="EBI-1055525">
        <id>Q04760</id>
        <label>GLO1</label>
    </interactant>
    <organismsDiffer>false</organismsDiffer>
    <experiments>3</experiments>
</comment>
<comment type="interaction">
    <interactant intactId="EBI-11983583">
        <id>Q3MIT2</id>
    </interactant>
    <interactant intactId="EBI-702178">
        <id>P02533</id>
        <label>KRT14</label>
    </interactant>
    <organismsDiffer>false</organismsDiffer>
    <experiments>3</experiments>
</comment>
<comment type="interaction">
    <interactant intactId="EBI-11983583">
        <id>Q3MIT2</id>
    </interactant>
    <interactant intactId="EBI-356410">
        <id>P08779</id>
        <label>KRT16</label>
    </interactant>
    <organismsDiffer>false</organismsDiffer>
    <experiments>3</experiments>
</comment>
<comment type="interaction">
    <interactant intactId="EBI-11983583">
        <id>Q3MIT2</id>
    </interactant>
    <interactant intactId="EBI-10172876">
        <id>Q7Z6G3-2</id>
        <label>NECAB2</label>
    </interactant>
    <organismsDiffer>false</organismsDiffer>
    <experiments>3</experiments>
</comment>
<comment type="interaction">
    <interactant intactId="EBI-11983583">
        <id>Q3MIT2</id>
    </interactant>
    <interactant intactId="EBI-2513462">
        <id>Q9UHP3</id>
        <label>USP25</label>
    </interactant>
    <organismsDiffer>false</organismsDiffer>
    <experiments>3</experiments>
</comment>
<comment type="interaction">
    <interactant intactId="EBI-11983583">
        <id>Q3MIT2</id>
    </interactant>
    <interactant intactId="EBI-17974829">
        <id>Q6GMQ7</id>
        <label>VPS16</label>
    </interactant>
    <organismsDiffer>false</organismsDiffer>
    <experiments>3</experiments>
</comment>
<comment type="subcellular location">
    <subcellularLocation>
        <location evidence="6 7 8 9">Nucleus</location>
    </subcellularLocation>
    <subcellularLocation>
        <location evidence="8 9 13">Cytoplasm</location>
    </subcellularLocation>
    <subcellularLocation>
        <location evidence="6">Mitochondrion</location>
    </subcellularLocation>
    <text evidence="6 8 13">Localizes mainly in the nucleus (Probable) (PubMed:31819270). tRNA pseudouridylate synthase activity is restricted to the cytoplasm (PubMed:31819270). Translocates from nucleus to mitochondria during TRAIL-induced apoptosis (PubMed:28981101).</text>
</comment>
<comment type="PTM">
    <text evidence="5">Proteolytically cleaved during TRAIL-induced cell death (PubMed:19712588). Cleaved, in vitro, either by caspase-3 (CASP3) or caspase-8 (CASP8) (PubMed:19712588).</text>
</comment>
<comment type="similarity">
    <text evidence="12">Belongs to the pseudouridine synthase Pus10 family.</text>
</comment>
<comment type="sequence caution" evidence="12">
    <conflict type="miscellaneous discrepancy">
        <sequence resource="EMBL-CDS" id="CAI46123"/>
    </conflict>
    <text>Partially unspliced pre-RNA.</text>
</comment>
<accession>Q3MIT2</accession>
<accession>Q5JPJ5</accession>
<accession>Q96MI8</accession>